<comment type="catalytic activity">
    <reaction evidence="1">
        <text>tRNA(Lys) + L-lysine + ATP = L-lysyl-tRNA(Lys) + AMP + diphosphate</text>
        <dbReference type="Rhea" id="RHEA:20792"/>
        <dbReference type="Rhea" id="RHEA-COMP:9696"/>
        <dbReference type="Rhea" id="RHEA-COMP:9697"/>
        <dbReference type="ChEBI" id="CHEBI:30616"/>
        <dbReference type="ChEBI" id="CHEBI:32551"/>
        <dbReference type="ChEBI" id="CHEBI:33019"/>
        <dbReference type="ChEBI" id="CHEBI:78442"/>
        <dbReference type="ChEBI" id="CHEBI:78529"/>
        <dbReference type="ChEBI" id="CHEBI:456215"/>
        <dbReference type="EC" id="6.1.1.6"/>
    </reaction>
</comment>
<comment type="cofactor">
    <cofactor evidence="1">
        <name>Mg(2+)</name>
        <dbReference type="ChEBI" id="CHEBI:18420"/>
    </cofactor>
    <text evidence="1">Binds 3 Mg(2+) ions per subunit.</text>
</comment>
<comment type="subunit">
    <text evidence="1">Homodimer.</text>
</comment>
<comment type="subcellular location">
    <subcellularLocation>
        <location evidence="1">Cytoplasm</location>
    </subcellularLocation>
</comment>
<comment type="similarity">
    <text evidence="1">Belongs to the class-II aminoacyl-tRNA synthetase family.</text>
</comment>
<evidence type="ECO:0000255" key="1">
    <source>
        <dbReference type="HAMAP-Rule" id="MF_00252"/>
    </source>
</evidence>
<accession>B0TTP2</accession>
<feature type="chain" id="PRO_1000078510" description="Lysine--tRNA ligase">
    <location>
        <begin position="1"/>
        <end position="501"/>
    </location>
</feature>
<feature type="binding site" evidence="1">
    <location>
        <position position="410"/>
    </location>
    <ligand>
        <name>Mg(2+)</name>
        <dbReference type="ChEBI" id="CHEBI:18420"/>
        <label>1</label>
    </ligand>
</feature>
<feature type="binding site" evidence="1">
    <location>
        <position position="417"/>
    </location>
    <ligand>
        <name>Mg(2+)</name>
        <dbReference type="ChEBI" id="CHEBI:18420"/>
        <label>1</label>
    </ligand>
</feature>
<feature type="binding site" evidence="1">
    <location>
        <position position="417"/>
    </location>
    <ligand>
        <name>Mg(2+)</name>
        <dbReference type="ChEBI" id="CHEBI:18420"/>
        <label>2</label>
    </ligand>
</feature>
<proteinExistence type="inferred from homology"/>
<organism>
    <name type="scientific">Shewanella halifaxensis (strain HAW-EB4)</name>
    <dbReference type="NCBI Taxonomy" id="458817"/>
    <lineage>
        <taxon>Bacteria</taxon>
        <taxon>Pseudomonadati</taxon>
        <taxon>Pseudomonadota</taxon>
        <taxon>Gammaproteobacteria</taxon>
        <taxon>Alteromonadales</taxon>
        <taxon>Shewanellaceae</taxon>
        <taxon>Shewanella</taxon>
    </lineage>
</organism>
<keyword id="KW-0030">Aminoacyl-tRNA synthetase</keyword>
<keyword id="KW-0067">ATP-binding</keyword>
<keyword id="KW-0963">Cytoplasm</keyword>
<keyword id="KW-0436">Ligase</keyword>
<keyword id="KW-0460">Magnesium</keyword>
<keyword id="KW-0479">Metal-binding</keyword>
<keyword id="KW-0547">Nucleotide-binding</keyword>
<keyword id="KW-0648">Protein biosynthesis</keyword>
<sequence length="501" mass="57002">MTEQTQDENKLIAERRAKLEHIRTNCPANGHPNNFDRKHKAADIQAEFGHNTKEELEGMGIERSIAGRVMAKRGPFLVIQDVSGRIQAYAGKDVQKDLKEKFQGLDIGDIIGVTGQLHLSGKGDLYVNMEEYQLLTKALRPLPEKFHGLTDQETRYRQRYVDLIVNEQSREAFIMRSKVVSAIRNFMVKKEFMEVETPMMHSIPGGASARPFATHHNALDIAMYLRIAPELYLKRLVVGGFERVFEINRNFRNEGLSPRHNPEFTMMEFYMAYADFNDLMDLTEEMLSSIATELCGSPQLPYGEHTVDFGGPYARLSMLDAIKKYNPDNATIQSMTYEEVKDVEFMRDLAKSLGMTVEKFWTCGQLLEEIFGETAETQLMQPTFITGYPADISPLARRNDDNHFITDRFEFFIGGREVANGFSELNDAEDQDRRFKAQVDAKDAGDDEAMFYDADYITALEHGLPPTAGQGIGIDRLVMLFTNTHTIRDVILFPAMRPQAN</sequence>
<gene>
    <name evidence="1" type="primary">lysS</name>
    <name type="ordered locus">Shal_0810</name>
</gene>
<dbReference type="EC" id="6.1.1.6" evidence="1"/>
<dbReference type="EMBL" id="CP000931">
    <property type="protein sequence ID" value="ABZ75385.1"/>
    <property type="molecule type" value="Genomic_DNA"/>
</dbReference>
<dbReference type="RefSeq" id="WP_012275937.1">
    <property type="nucleotide sequence ID" value="NC_010334.1"/>
</dbReference>
<dbReference type="SMR" id="B0TTP2"/>
<dbReference type="STRING" id="458817.Shal_0810"/>
<dbReference type="KEGG" id="shl:Shal_0810"/>
<dbReference type="eggNOG" id="COG1190">
    <property type="taxonomic scope" value="Bacteria"/>
</dbReference>
<dbReference type="HOGENOM" id="CLU_008255_6_2_6"/>
<dbReference type="OrthoDB" id="9802326at2"/>
<dbReference type="Proteomes" id="UP000001317">
    <property type="component" value="Chromosome"/>
</dbReference>
<dbReference type="GO" id="GO:0005829">
    <property type="term" value="C:cytosol"/>
    <property type="evidence" value="ECO:0007669"/>
    <property type="project" value="TreeGrafter"/>
</dbReference>
<dbReference type="GO" id="GO:0005524">
    <property type="term" value="F:ATP binding"/>
    <property type="evidence" value="ECO:0007669"/>
    <property type="project" value="UniProtKB-UniRule"/>
</dbReference>
<dbReference type="GO" id="GO:0004824">
    <property type="term" value="F:lysine-tRNA ligase activity"/>
    <property type="evidence" value="ECO:0007669"/>
    <property type="project" value="UniProtKB-UniRule"/>
</dbReference>
<dbReference type="GO" id="GO:0000287">
    <property type="term" value="F:magnesium ion binding"/>
    <property type="evidence" value="ECO:0007669"/>
    <property type="project" value="UniProtKB-UniRule"/>
</dbReference>
<dbReference type="GO" id="GO:0000049">
    <property type="term" value="F:tRNA binding"/>
    <property type="evidence" value="ECO:0007669"/>
    <property type="project" value="TreeGrafter"/>
</dbReference>
<dbReference type="GO" id="GO:0006430">
    <property type="term" value="P:lysyl-tRNA aminoacylation"/>
    <property type="evidence" value="ECO:0007669"/>
    <property type="project" value="UniProtKB-UniRule"/>
</dbReference>
<dbReference type="CDD" id="cd00775">
    <property type="entry name" value="LysRS_core"/>
    <property type="match status" value="1"/>
</dbReference>
<dbReference type="CDD" id="cd04322">
    <property type="entry name" value="LysRS_N"/>
    <property type="match status" value="1"/>
</dbReference>
<dbReference type="FunFam" id="2.40.50.140:FF:000024">
    <property type="entry name" value="Lysine--tRNA ligase"/>
    <property type="match status" value="1"/>
</dbReference>
<dbReference type="FunFam" id="3.30.930.10:FF:000001">
    <property type="entry name" value="Lysine--tRNA ligase"/>
    <property type="match status" value="1"/>
</dbReference>
<dbReference type="Gene3D" id="3.30.930.10">
    <property type="entry name" value="Bira Bifunctional Protein, Domain 2"/>
    <property type="match status" value="1"/>
</dbReference>
<dbReference type="Gene3D" id="2.40.50.140">
    <property type="entry name" value="Nucleic acid-binding proteins"/>
    <property type="match status" value="1"/>
</dbReference>
<dbReference type="HAMAP" id="MF_00252">
    <property type="entry name" value="Lys_tRNA_synth_class2"/>
    <property type="match status" value="1"/>
</dbReference>
<dbReference type="InterPro" id="IPR004364">
    <property type="entry name" value="Aa-tRNA-synt_II"/>
</dbReference>
<dbReference type="InterPro" id="IPR006195">
    <property type="entry name" value="aa-tRNA-synth_II"/>
</dbReference>
<dbReference type="InterPro" id="IPR045864">
    <property type="entry name" value="aa-tRNA-synth_II/BPL/LPL"/>
</dbReference>
<dbReference type="InterPro" id="IPR002313">
    <property type="entry name" value="Lys-tRNA-ligase_II"/>
</dbReference>
<dbReference type="InterPro" id="IPR044136">
    <property type="entry name" value="Lys-tRNA-ligase_II_N"/>
</dbReference>
<dbReference type="InterPro" id="IPR018149">
    <property type="entry name" value="Lys-tRNA-synth_II_C"/>
</dbReference>
<dbReference type="InterPro" id="IPR012340">
    <property type="entry name" value="NA-bd_OB-fold"/>
</dbReference>
<dbReference type="InterPro" id="IPR004365">
    <property type="entry name" value="NA-bd_OB_tRNA"/>
</dbReference>
<dbReference type="NCBIfam" id="TIGR00499">
    <property type="entry name" value="lysS_bact"/>
    <property type="match status" value="1"/>
</dbReference>
<dbReference type="NCBIfam" id="NF001756">
    <property type="entry name" value="PRK00484.1"/>
    <property type="match status" value="1"/>
</dbReference>
<dbReference type="PANTHER" id="PTHR42918:SF15">
    <property type="entry name" value="LYSINE--TRNA LIGASE, CHLOROPLASTIC_MITOCHONDRIAL"/>
    <property type="match status" value="1"/>
</dbReference>
<dbReference type="PANTHER" id="PTHR42918">
    <property type="entry name" value="LYSYL-TRNA SYNTHETASE"/>
    <property type="match status" value="1"/>
</dbReference>
<dbReference type="Pfam" id="PF00152">
    <property type="entry name" value="tRNA-synt_2"/>
    <property type="match status" value="1"/>
</dbReference>
<dbReference type="Pfam" id="PF01336">
    <property type="entry name" value="tRNA_anti-codon"/>
    <property type="match status" value="1"/>
</dbReference>
<dbReference type="PRINTS" id="PR00982">
    <property type="entry name" value="TRNASYNTHLYS"/>
</dbReference>
<dbReference type="SUPFAM" id="SSF55681">
    <property type="entry name" value="Class II aaRS and biotin synthetases"/>
    <property type="match status" value="1"/>
</dbReference>
<dbReference type="SUPFAM" id="SSF50249">
    <property type="entry name" value="Nucleic acid-binding proteins"/>
    <property type="match status" value="1"/>
</dbReference>
<dbReference type="PROSITE" id="PS50862">
    <property type="entry name" value="AA_TRNA_LIGASE_II"/>
    <property type="match status" value="1"/>
</dbReference>
<protein>
    <recommendedName>
        <fullName evidence="1">Lysine--tRNA ligase</fullName>
        <ecNumber evidence="1">6.1.1.6</ecNumber>
    </recommendedName>
    <alternativeName>
        <fullName evidence="1">Lysyl-tRNA synthetase</fullName>
        <shortName evidence="1">LysRS</shortName>
    </alternativeName>
</protein>
<reference key="1">
    <citation type="submission" date="2008-01" db="EMBL/GenBank/DDBJ databases">
        <title>Complete sequence of Shewanella halifaxensis HAW-EB4.</title>
        <authorList>
            <consortium name="US DOE Joint Genome Institute"/>
            <person name="Copeland A."/>
            <person name="Lucas S."/>
            <person name="Lapidus A."/>
            <person name="Glavina del Rio T."/>
            <person name="Dalin E."/>
            <person name="Tice H."/>
            <person name="Bruce D."/>
            <person name="Goodwin L."/>
            <person name="Pitluck S."/>
            <person name="Sims D."/>
            <person name="Brettin T."/>
            <person name="Detter J.C."/>
            <person name="Han C."/>
            <person name="Kuske C.R."/>
            <person name="Schmutz J."/>
            <person name="Larimer F."/>
            <person name="Land M."/>
            <person name="Hauser L."/>
            <person name="Kyrpides N."/>
            <person name="Kim E."/>
            <person name="Zhao J.-S."/>
            <person name="Richardson P."/>
        </authorList>
    </citation>
    <scope>NUCLEOTIDE SEQUENCE [LARGE SCALE GENOMIC DNA]</scope>
    <source>
        <strain>HAW-EB4</strain>
    </source>
</reference>
<name>SYK_SHEHH</name>